<organism>
    <name type="scientific">Bacillus subtilis (strain 168)</name>
    <dbReference type="NCBI Taxonomy" id="224308"/>
    <lineage>
        <taxon>Bacteria</taxon>
        <taxon>Bacillati</taxon>
        <taxon>Bacillota</taxon>
        <taxon>Bacilli</taxon>
        <taxon>Bacillales</taxon>
        <taxon>Bacillaceae</taxon>
        <taxon>Bacillus</taxon>
    </lineage>
</organism>
<evidence type="ECO:0000255" key="1"/>
<evidence type="ECO:0000269" key="2">
    <source>
    </source>
</evidence>
<evidence type="ECO:0000269" key="3">
    <source>
    </source>
</evidence>
<evidence type="ECO:0000269" key="4">
    <source>
    </source>
</evidence>
<evidence type="ECO:0000269" key="5">
    <source>
    </source>
</evidence>
<evidence type="ECO:0000305" key="6"/>
<accession>O32241</accession>
<comment type="function">
    <text evidence="2 4">Immunity protein that provides protection for the cell against the toxic effects of SDP, its own SdpC-derived killing factor, and that functions as a receptor/signal transduction protein as well. Once SDP accumulates in the extracellular milieu, SdpI binds to SDP, causing sequestration of SdpR at the bacterial membrane.</text>
</comment>
<comment type="subcellular location">
    <subcellularLocation>
        <location evidence="6">Membrane</location>
        <topology evidence="6">Multi-pass membrane protein</topology>
    </subcellularLocation>
</comment>
<comment type="induction">
    <text evidence="2 5">By Spo0A during nutrient starvation, through its direct negative control of AbrB, repressed by AbrB during regular growth when nutrients are plentiful, and also by SdpR (PubMed:16469701). Induced by expression of SDP (active peptide of sdpC) (PubMed:16469701, PubMed:23687264).</text>
</comment>
<comment type="disruption phenotype">
    <text evidence="3">Results in increased SigW expression which is dependent on SdpC. Results in weaker growth (70% of wild-type cell density) on LB medium, with more pronounced effects on sporulation medium (15% of wild-type). Concomitant deletion of SigW results in greatly diminished growth (5% of wild-type on LB and 3% on sporulation medium). Over time, single SdpI mutant stops growing on sporulation medium, while the SdpI SigW double mutant eventually lyses. Deletion of RsiW restores growth of the SdpI single mutant to near wild-type levels.</text>
</comment>
<comment type="online information" name="Protein Spotlight">
    <link uri="https://www.proteinspotlight.org/back_issues/090"/>
    <text>I'll have you for supper - Issue 90 of January 2008</text>
</comment>
<sequence>MKKNIISIIIVCLSFLTSIILYQYLPEEIPIQWSGNKPAAIVSKPLTIFIIPVVMLIYYLTFYMLTIKSTQKNKALLFLASNNMLILLYILQLSTLLISLGYEVNIDLIIGLGVGIFLIIGGNSMQLAEQNHLIGLRTPWTLKDETVWKLGNRFASKVLVVCGFIIAVLSFFTGEYIILIMIVLVLLALVISTLASYHYYKKLNGSR</sequence>
<gene>
    <name type="primary">sdpI</name>
    <name type="synonym">yvaZ</name>
    <name type="ordered locus">BSU33780</name>
</gene>
<keyword id="KW-0472">Membrane</keyword>
<keyword id="KW-1185">Reference proteome</keyword>
<keyword id="KW-0812">Transmembrane</keyword>
<keyword id="KW-1133">Transmembrane helix</keyword>
<dbReference type="EMBL" id="AL009126">
    <property type="protein sequence ID" value="CAB15383.1"/>
    <property type="molecule type" value="Genomic_DNA"/>
</dbReference>
<dbReference type="PIR" id="C70029">
    <property type="entry name" value="C70029"/>
</dbReference>
<dbReference type="RefSeq" id="NP_391258.1">
    <property type="nucleotide sequence ID" value="NC_000964.3"/>
</dbReference>
<dbReference type="RefSeq" id="WP_003228357.1">
    <property type="nucleotide sequence ID" value="NZ_OZ025638.1"/>
</dbReference>
<dbReference type="FunCoup" id="O32241">
    <property type="interactions" value="7"/>
</dbReference>
<dbReference type="STRING" id="224308.BSU33780"/>
<dbReference type="TCDB" id="9.A.32.1.1">
    <property type="family name" value="the sdpc (peptide-antibiotic killer factor) immunity protein, sdpi (sdpi) family"/>
</dbReference>
<dbReference type="PaxDb" id="224308-BSU33780"/>
<dbReference type="EnsemblBacteria" id="CAB15383">
    <property type="protein sequence ID" value="CAB15383"/>
    <property type="gene ID" value="BSU_33780"/>
</dbReference>
<dbReference type="GeneID" id="936238"/>
<dbReference type="KEGG" id="bsu:BSU33780"/>
<dbReference type="PATRIC" id="fig|224308.179.peg.3663"/>
<dbReference type="eggNOG" id="COG5658">
    <property type="taxonomic scope" value="Bacteria"/>
</dbReference>
<dbReference type="InParanoid" id="O32241"/>
<dbReference type="OrthoDB" id="9808690at2"/>
<dbReference type="BioCyc" id="BSUB:BSU33780-MONOMER"/>
<dbReference type="Proteomes" id="UP000001570">
    <property type="component" value="Chromosome"/>
</dbReference>
<dbReference type="GO" id="GO:0016020">
    <property type="term" value="C:membrane"/>
    <property type="evidence" value="ECO:0007669"/>
    <property type="project" value="UniProtKB-SubCell"/>
</dbReference>
<dbReference type="GO" id="GO:0009636">
    <property type="term" value="P:response to toxic substance"/>
    <property type="evidence" value="ECO:0000314"/>
    <property type="project" value="UniProtKB"/>
</dbReference>
<dbReference type="InterPro" id="IPR012867">
    <property type="entry name" value="DUF1648"/>
</dbReference>
<dbReference type="InterPro" id="IPR026272">
    <property type="entry name" value="SdpI"/>
</dbReference>
<dbReference type="InterPro" id="IPR025962">
    <property type="entry name" value="SdpI/YhfL"/>
</dbReference>
<dbReference type="PANTHER" id="PTHR37810">
    <property type="entry name" value="IMMUNITY PROTEIN SDPI"/>
    <property type="match status" value="1"/>
</dbReference>
<dbReference type="PANTHER" id="PTHR37810:SF5">
    <property type="entry name" value="IMMUNITY PROTEIN SDPI"/>
    <property type="match status" value="1"/>
</dbReference>
<dbReference type="Pfam" id="PF07853">
    <property type="entry name" value="DUF1648"/>
    <property type="match status" value="1"/>
</dbReference>
<dbReference type="Pfam" id="PF13630">
    <property type="entry name" value="SdpI"/>
    <property type="match status" value="1"/>
</dbReference>
<dbReference type="PIRSF" id="PIRSF038959">
    <property type="entry name" value="SdpI"/>
    <property type="match status" value="1"/>
</dbReference>
<reference key="1">
    <citation type="journal article" date="1997" name="Nature">
        <title>The complete genome sequence of the Gram-positive bacterium Bacillus subtilis.</title>
        <authorList>
            <person name="Kunst F."/>
            <person name="Ogasawara N."/>
            <person name="Moszer I."/>
            <person name="Albertini A.M."/>
            <person name="Alloni G."/>
            <person name="Azevedo V."/>
            <person name="Bertero M.G."/>
            <person name="Bessieres P."/>
            <person name="Bolotin A."/>
            <person name="Borchert S."/>
            <person name="Borriss R."/>
            <person name="Boursier L."/>
            <person name="Brans A."/>
            <person name="Braun M."/>
            <person name="Brignell S.C."/>
            <person name="Bron S."/>
            <person name="Brouillet S."/>
            <person name="Bruschi C.V."/>
            <person name="Caldwell B."/>
            <person name="Capuano V."/>
            <person name="Carter N.M."/>
            <person name="Choi S.-K."/>
            <person name="Codani J.-J."/>
            <person name="Connerton I.F."/>
            <person name="Cummings N.J."/>
            <person name="Daniel R.A."/>
            <person name="Denizot F."/>
            <person name="Devine K.M."/>
            <person name="Duesterhoeft A."/>
            <person name="Ehrlich S.D."/>
            <person name="Emmerson P.T."/>
            <person name="Entian K.-D."/>
            <person name="Errington J."/>
            <person name="Fabret C."/>
            <person name="Ferrari E."/>
            <person name="Foulger D."/>
            <person name="Fritz C."/>
            <person name="Fujita M."/>
            <person name="Fujita Y."/>
            <person name="Fuma S."/>
            <person name="Galizzi A."/>
            <person name="Galleron N."/>
            <person name="Ghim S.-Y."/>
            <person name="Glaser P."/>
            <person name="Goffeau A."/>
            <person name="Golightly E.J."/>
            <person name="Grandi G."/>
            <person name="Guiseppi G."/>
            <person name="Guy B.J."/>
            <person name="Haga K."/>
            <person name="Haiech J."/>
            <person name="Harwood C.R."/>
            <person name="Henaut A."/>
            <person name="Hilbert H."/>
            <person name="Holsappel S."/>
            <person name="Hosono S."/>
            <person name="Hullo M.-F."/>
            <person name="Itaya M."/>
            <person name="Jones L.-M."/>
            <person name="Joris B."/>
            <person name="Karamata D."/>
            <person name="Kasahara Y."/>
            <person name="Klaerr-Blanchard M."/>
            <person name="Klein C."/>
            <person name="Kobayashi Y."/>
            <person name="Koetter P."/>
            <person name="Koningstein G."/>
            <person name="Krogh S."/>
            <person name="Kumano M."/>
            <person name="Kurita K."/>
            <person name="Lapidus A."/>
            <person name="Lardinois S."/>
            <person name="Lauber J."/>
            <person name="Lazarevic V."/>
            <person name="Lee S.-M."/>
            <person name="Levine A."/>
            <person name="Liu H."/>
            <person name="Masuda S."/>
            <person name="Mauel C."/>
            <person name="Medigue C."/>
            <person name="Medina N."/>
            <person name="Mellado R.P."/>
            <person name="Mizuno M."/>
            <person name="Moestl D."/>
            <person name="Nakai S."/>
            <person name="Noback M."/>
            <person name="Noone D."/>
            <person name="O'Reilly M."/>
            <person name="Ogawa K."/>
            <person name="Ogiwara A."/>
            <person name="Oudega B."/>
            <person name="Park S.-H."/>
            <person name="Parro V."/>
            <person name="Pohl T.M."/>
            <person name="Portetelle D."/>
            <person name="Porwollik S."/>
            <person name="Prescott A.M."/>
            <person name="Presecan E."/>
            <person name="Pujic P."/>
            <person name="Purnelle B."/>
            <person name="Rapoport G."/>
            <person name="Rey M."/>
            <person name="Reynolds S."/>
            <person name="Rieger M."/>
            <person name="Rivolta C."/>
            <person name="Rocha E."/>
            <person name="Roche B."/>
            <person name="Rose M."/>
            <person name="Sadaie Y."/>
            <person name="Sato T."/>
            <person name="Scanlan E."/>
            <person name="Schleich S."/>
            <person name="Schroeter R."/>
            <person name="Scoffone F."/>
            <person name="Sekiguchi J."/>
            <person name="Sekowska A."/>
            <person name="Seror S.J."/>
            <person name="Serror P."/>
            <person name="Shin B.-S."/>
            <person name="Soldo B."/>
            <person name="Sorokin A."/>
            <person name="Tacconi E."/>
            <person name="Takagi T."/>
            <person name="Takahashi H."/>
            <person name="Takemaru K."/>
            <person name="Takeuchi M."/>
            <person name="Tamakoshi A."/>
            <person name="Tanaka T."/>
            <person name="Terpstra P."/>
            <person name="Tognoni A."/>
            <person name="Tosato V."/>
            <person name="Uchiyama S."/>
            <person name="Vandenbol M."/>
            <person name="Vannier F."/>
            <person name="Vassarotti A."/>
            <person name="Viari A."/>
            <person name="Wambutt R."/>
            <person name="Wedler E."/>
            <person name="Wedler H."/>
            <person name="Weitzenegger T."/>
            <person name="Winters P."/>
            <person name="Wipat A."/>
            <person name="Yamamoto H."/>
            <person name="Yamane K."/>
            <person name="Yasumoto K."/>
            <person name="Yata K."/>
            <person name="Yoshida K."/>
            <person name="Yoshikawa H.-F."/>
            <person name="Zumstein E."/>
            <person name="Yoshikawa H."/>
            <person name="Danchin A."/>
        </authorList>
    </citation>
    <scope>NUCLEOTIDE SEQUENCE [LARGE SCALE GENOMIC DNA]</scope>
    <source>
        <strain>168</strain>
    </source>
</reference>
<reference key="2">
    <citation type="journal article" date="2006" name="Cell">
        <title>A three-protein signaling pathway governing immunity to a bacterial cannibalism toxin.</title>
        <authorList>
            <person name="Ellermeier C.D."/>
            <person name="Hobbs E.C."/>
            <person name="Gonzalez-Pastor J.E."/>
            <person name="Losick R."/>
        </authorList>
    </citation>
    <scope>FUNCTION</scope>
    <scope>INDUCTION</scope>
    <scope>MUTAGENESIS OF ILE-6; ILE-50; PHE-78; MET-84; LEU-85; ILE-98; GLN-126 AND SER-156</scope>
    <source>
        <strain>168 / PY79</strain>
    </source>
</reference>
<reference key="3">
    <citation type="journal article" date="2006" name="Mol. Microbiol.">
        <title>Identification of Bacillus subtilis sigma-dependent genes that provide intrinsic resistance to antimicrobial compounds produced by Bacilli.</title>
        <authorList>
            <person name="Butcher B.G."/>
            <person name="Helmann J.D."/>
        </authorList>
    </citation>
    <scope>DISRUPTION PHENOTYPE</scope>
</reference>
<reference key="4">
    <citation type="journal article" date="2012" name="Mol. Microbiol.">
        <title>The Bacillus subtilis cannibalism toxin SDP collapses the proton motive force and induces autolysis.</title>
        <authorList>
            <person name="Lamsa A."/>
            <person name="Liu W.T."/>
            <person name="Dorrestein P.C."/>
            <person name="Pogliano K."/>
        </authorList>
    </citation>
    <scope>FUNCTION</scope>
    <source>
        <strain>168 / PY79</strain>
    </source>
</reference>
<reference key="5">
    <citation type="journal article" date="2013" name="J. Bacteriol.">
        <title>Production of the cannibalism toxin SDP is a multistep process that requires SdpA and SdpB.</title>
        <authorList>
            <person name="Perez Morales T.G."/>
            <person name="Ho T.D."/>
            <person name="Liu W.T."/>
            <person name="Dorrestein P.C."/>
            <person name="Ellermeier C.D."/>
        </authorList>
    </citation>
    <scope>INDUCTION</scope>
    <source>
        <strain>168 / PY79</strain>
    </source>
</reference>
<protein>
    <recommendedName>
        <fullName>Immunity protein SdpI</fullName>
    </recommendedName>
</protein>
<proteinExistence type="evidence at protein level"/>
<feature type="chain" id="PRO_0000312744" description="Immunity protein SdpI">
    <location>
        <begin position="1"/>
        <end position="207"/>
    </location>
</feature>
<feature type="transmembrane region" description="Helical" evidence="1">
    <location>
        <begin position="5"/>
        <end position="25"/>
    </location>
</feature>
<feature type="transmembrane region" description="Helical" evidence="1">
    <location>
        <begin position="47"/>
        <end position="67"/>
    </location>
</feature>
<feature type="transmembrane region" description="Helical" evidence="1">
    <location>
        <begin position="78"/>
        <end position="98"/>
    </location>
</feature>
<feature type="transmembrane region" description="Helical" evidence="1">
    <location>
        <begin position="100"/>
        <end position="120"/>
    </location>
</feature>
<feature type="transmembrane region" description="Helical" evidence="1">
    <location>
        <begin position="150"/>
        <end position="170"/>
    </location>
</feature>
<feature type="transmembrane region" description="Helical" evidence="1">
    <location>
        <begin position="171"/>
        <end position="191"/>
    </location>
</feature>
<feature type="mutagenesis site" description="Ability to bypass the requirement of SdpC binding for expression of the sdpRI genes." evidence="2">
    <original>I</original>
    <variation>T</variation>
    <location>
        <position position="6"/>
    </location>
</feature>
<feature type="mutagenesis site" description="Ability to bypass the requirement of SdpC binding for expression of the sdpRI genes." evidence="2">
    <original>I</original>
    <variation>T</variation>
    <location>
        <position position="50"/>
    </location>
</feature>
<feature type="mutagenesis site" description="Ability to bypass the requirement of SdpC binding for expression of the sdpRI genes." evidence="2">
    <original>F</original>
    <variation>I</variation>
    <location>
        <position position="78"/>
    </location>
</feature>
<feature type="mutagenesis site" description="Ability to bypass the requirement of SdpC binding for expression of the sdpRI genes." evidence="2">
    <original>M</original>
    <variation>T</variation>
    <location>
        <position position="84"/>
    </location>
</feature>
<feature type="mutagenesis site" description="Ability to bypass the requirement of SdpC binding for expression of the sdpRI genes." evidence="2">
    <original>L</original>
    <variation>S</variation>
    <location>
        <position position="85"/>
    </location>
</feature>
<feature type="mutagenesis site" description="Ability to bypass the requirement of SdpC binding for expression of the sdpRI genes." evidence="2">
    <original>I</original>
    <variation>K</variation>
    <location>
        <position position="98"/>
    </location>
</feature>
<feature type="mutagenesis site" description="Loss of ability to promote transcription of the sdpRI genes in response to SdpC binding. No effect in ability to confer immunity to SdpC." evidence="2">
    <original>Q</original>
    <variation>L</variation>
    <location>
        <position position="126"/>
    </location>
</feature>
<feature type="mutagenesis site" description="Loss of ability to promote transcription of the sdpRI genes in response to SdpC binding. No effect in ability to confer immunity to SdpC." evidence="2">
    <original>S</original>
    <variation>T</variation>
    <location>
        <position position="156"/>
    </location>
</feature>
<name>SDPI_BACSU</name>